<feature type="chain" id="PRO_0000117904" description="NADH-ubiquinone oxidoreductase chain 4">
    <location>
        <begin position="1" status="less than"/>
        <end position="231" status="greater than"/>
    </location>
</feature>
<feature type="transmembrane region" description="Helical" evidence="2">
    <location>
        <begin position="1"/>
        <end position="21"/>
    </location>
</feature>
<feature type="transmembrane region" description="Helical" evidence="2">
    <location>
        <begin position="34"/>
        <end position="54"/>
    </location>
</feature>
<feature type="transmembrane region" description="Helical" evidence="2">
    <location>
        <begin position="63"/>
        <end position="85"/>
    </location>
</feature>
<feature type="transmembrane region" description="Helical" evidence="2">
    <location>
        <begin position="89"/>
        <end position="111"/>
    </location>
</feature>
<feature type="transmembrane region" description="Helical" evidence="2">
    <location>
        <begin position="128"/>
        <end position="148"/>
    </location>
</feature>
<feature type="transmembrane region" description="Helical" evidence="2">
    <location>
        <begin position="156"/>
        <end position="176"/>
    </location>
</feature>
<feature type="non-terminal residue">
    <location>
        <position position="1"/>
    </location>
</feature>
<feature type="non-terminal residue">
    <location>
        <position position="231"/>
    </location>
</feature>
<organism>
    <name type="scientific">Bothriechis lateralis</name>
    <name type="common">Side-striped palm pitviper</name>
    <dbReference type="NCBI Taxonomy" id="44727"/>
    <lineage>
        <taxon>Eukaryota</taxon>
        <taxon>Metazoa</taxon>
        <taxon>Chordata</taxon>
        <taxon>Craniata</taxon>
        <taxon>Vertebrata</taxon>
        <taxon>Euteleostomi</taxon>
        <taxon>Lepidosauria</taxon>
        <taxon>Squamata</taxon>
        <taxon>Bifurcata</taxon>
        <taxon>Unidentata</taxon>
        <taxon>Episquamata</taxon>
        <taxon>Toxicofera</taxon>
        <taxon>Serpentes</taxon>
        <taxon>Colubroidea</taxon>
        <taxon>Viperidae</taxon>
        <taxon>Crotalinae</taxon>
        <taxon>Bothriechis</taxon>
    </lineage>
</organism>
<protein>
    <recommendedName>
        <fullName>NADH-ubiquinone oxidoreductase chain 4</fullName>
        <ecNumber>7.1.1.2</ecNumber>
    </recommendedName>
    <alternativeName>
        <fullName>NADH dehydrogenase subunit 4</fullName>
    </alternativeName>
</protein>
<gene>
    <name type="primary">MT-ND4</name>
    <name type="synonym">MTND4</name>
    <name type="synonym">NADH4</name>
    <name type="synonym">ND4</name>
</gene>
<proteinExistence type="inferred from homology"/>
<reference key="1">
    <citation type="journal article" date="1996" name="Copeia">
        <title>Crotaline intergeneric relationships based on mitochondrial DNA sequence data.</title>
        <authorList>
            <person name="Kraus F."/>
            <person name="Mink D.G."/>
            <person name="Brown W.M."/>
        </authorList>
    </citation>
    <scope>NUCLEOTIDE SEQUENCE [GENOMIC DNA]</scope>
</reference>
<keyword id="KW-0249">Electron transport</keyword>
<keyword id="KW-0472">Membrane</keyword>
<keyword id="KW-0496">Mitochondrion</keyword>
<keyword id="KW-0520">NAD</keyword>
<keyword id="KW-0679">Respiratory chain</keyword>
<keyword id="KW-1278">Translocase</keyword>
<keyword id="KW-0812">Transmembrane</keyword>
<keyword id="KW-1133">Transmembrane helix</keyword>
<keyword id="KW-0813">Transport</keyword>
<keyword id="KW-0830">Ubiquinone</keyword>
<sequence>PIAGSMVLAAILLKLGGYGIIRMMQVLPTTKTEMFLPFLVLALWGAILANLTCLQQTDLKSLIAYSSISHMGLVVAAIIIQTPWGLSGAMALMVAHGFTSSSLFCLANTTYERTHTRILILTRGFHNILPMATTWWLLANLLNIATPPSMNFTGELLIMSALFNWCPTTIILLGLSMLITASYSLHMFLSTQMGPTALSNQTAPMHSREHLLITLHLIPLMLISMKPELVI</sequence>
<accession>O03700</accession>
<dbReference type="EC" id="7.1.1.2"/>
<dbReference type="EMBL" id="U41873">
    <property type="protein sequence ID" value="AAB46635.1"/>
    <property type="molecule type" value="Genomic_DNA"/>
</dbReference>
<dbReference type="SMR" id="O03700"/>
<dbReference type="GO" id="GO:0031966">
    <property type="term" value="C:mitochondrial membrane"/>
    <property type="evidence" value="ECO:0007669"/>
    <property type="project" value="UniProtKB-SubCell"/>
</dbReference>
<dbReference type="GO" id="GO:0008137">
    <property type="term" value="F:NADH dehydrogenase (ubiquinone) activity"/>
    <property type="evidence" value="ECO:0007669"/>
    <property type="project" value="UniProtKB-EC"/>
</dbReference>
<dbReference type="GO" id="GO:0048039">
    <property type="term" value="F:ubiquinone binding"/>
    <property type="evidence" value="ECO:0007669"/>
    <property type="project" value="TreeGrafter"/>
</dbReference>
<dbReference type="GO" id="GO:0042773">
    <property type="term" value="P:ATP synthesis coupled electron transport"/>
    <property type="evidence" value="ECO:0007669"/>
    <property type="project" value="InterPro"/>
</dbReference>
<dbReference type="GO" id="GO:0015990">
    <property type="term" value="P:electron transport coupled proton transport"/>
    <property type="evidence" value="ECO:0007669"/>
    <property type="project" value="TreeGrafter"/>
</dbReference>
<dbReference type="InterPro" id="IPR003918">
    <property type="entry name" value="NADH_UbQ_OxRdtase"/>
</dbReference>
<dbReference type="InterPro" id="IPR001750">
    <property type="entry name" value="ND/Mrp_TM"/>
</dbReference>
<dbReference type="PANTHER" id="PTHR43507">
    <property type="entry name" value="NADH-UBIQUINONE OXIDOREDUCTASE CHAIN 4"/>
    <property type="match status" value="1"/>
</dbReference>
<dbReference type="PANTHER" id="PTHR43507:SF20">
    <property type="entry name" value="NADH-UBIQUINONE OXIDOREDUCTASE CHAIN 4"/>
    <property type="match status" value="1"/>
</dbReference>
<dbReference type="Pfam" id="PF00361">
    <property type="entry name" value="Proton_antipo_M"/>
    <property type="match status" value="1"/>
</dbReference>
<comment type="function">
    <text evidence="1">Core subunit of the mitochondrial membrane respiratory chain NADH dehydrogenase (Complex I) that is believed to belong to the minimal assembly required for catalysis. Complex I functions in the transfer of electrons from NADH to the respiratory chain. The immediate electron acceptor for the enzyme is believed to be ubiquinone (By similarity).</text>
</comment>
<comment type="catalytic activity">
    <reaction>
        <text>a ubiquinone + NADH + 5 H(+)(in) = a ubiquinol + NAD(+) + 4 H(+)(out)</text>
        <dbReference type="Rhea" id="RHEA:29091"/>
        <dbReference type="Rhea" id="RHEA-COMP:9565"/>
        <dbReference type="Rhea" id="RHEA-COMP:9566"/>
        <dbReference type="ChEBI" id="CHEBI:15378"/>
        <dbReference type="ChEBI" id="CHEBI:16389"/>
        <dbReference type="ChEBI" id="CHEBI:17976"/>
        <dbReference type="ChEBI" id="CHEBI:57540"/>
        <dbReference type="ChEBI" id="CHEBI:57945"/>
        <dbReference type="EC" id="7.1.1.2"/>
    </reaction>
</comment>
<comment type="subcellular location">
    <subcellularLocation>
        <location evidence="1">Mitochondrion membrane</location>
        <topology evidence="1">Multi-pass membrane protein</topology>
    </subcellularLocation>
</comment>
<comment type="similarity">
    <text evidence="3">Belongs to the complex I subunit 4 family.</text>
</comment>
<name>NU4M_BOTLA</name>
<evidence type="ECO:0000250" key="1"/>
<evidence type="ECO:0000255" key="2"/>
<evidence type="ECO:0000305" key="3"/>
<geneLocation type="mitochondrion"/>